<evidence type="ECO:0000255" key="1">
    <source>
        <dbReference type="PROSITE-ProRule" id="PRU00227"/>
    </source>
</evidence>
<evidence type="ECO:0000256" key="2">
    <source>
        <dbReference type="SAM" id="MobiDB-lite"/>
    </source>
</evidence>
<evidence type="ECO:0000269" key="3">
    <source>
    </source>
</evidence>
<evidence type="ECO:0000269" key="4">
    <source>
    </source>
</evidence>
<evidence type="ECO:0000269" key="5">
    <source>
    </source>
</evidence>
<evidence type="ECO:0000303" key="6">
    <source>
    </source>
</evidence>
<evidence type="ECO:0000303" key="7">
    <source>
    </source>
</evidence>
<keyword id="KW-0238">DNA-binding</keyword>
<keyword id="KW-0479">Metal-binding</keyword>
<keyword id="KW-0539">Nucleus</keyword>
<keyword id="KW-1185">Reference proteome</keyword>
<keyword id="KW-0804">Transcription</keyword>
<keyword id="KW-0805">Transcription regulation</keyword>
<keyword id="KW-0862">Zinc</keyword>
<gene>
    <name evidence="7" type="primary">aurR2</name>
    <name evidence="6" type="synonym">GIP5</name>
    <name type="ORF">FG02323</name>
    <name type="ORF">FGRAMPH1_01T05591</name>
</gene>
<reference key="1">
    <citation type="journal article" date="2007" name="Science">
        <title>The Fusarium graminearum genome reveals a link between localized polymorphism and pathogen specialization.</title>
        <authorList>
            <person name="Cuomo C.A."/>
            <person name="Gueldener U."/>
            <person name="Xu J.-R."/>
            <person name="Trail F."/>
            <person name="Turgeon B.G."/>
            <person name="Di Pietro A."/>
            <person name="Walton J.D."/>
            <person name="Ma L.-J."/>
            <person name="Baker S.E."/>
            <person name="Rep M."/>
            <person name="Adam G."/>
            <person name="Antoniw J."/>
            <person name="Baldwin T."/>
            <person name="Calvo S.E."/>
            <person name="Chang Y.-L."/>
            <person name="DeCaprio D."/>
            <person name="Gale L.R."/>
            <person name="Gnerre S."/>
            <person name="Goswami R.S."/>
            <person name="Hammond-Kosack K."/>
            <person name="Harris L.J."/>
            <person name="Hilburn K."/>
            <person name="Kennell J.C."/>
            <person name="Kroken S."/>
            <person name="Magnuson J.K."/>
            <person name="Mannhaupt G."/>
            <person name="Mauceli E.W."/>
            <person name="Mewes H.-W."/>
            <person name="Mitterbauer R."/>
            <person name="Muehlbauer G."/>
            <person name="Muensterkoetter M."/>
            <person name="Nelson D."/>
            <person name="O'Donnell K."/>
            <person name="Ouellet T."/>
            <person name="Qi W."/>
            <person name="Quesneville H."/>
            <person name="Roncero M.I.G."/>
            <person name="Seong K.-Y."/>
            <person name="Tetko I.V."/>
            <person name="Urban M."/>
            <person name="Waalwijk C."/>
            <person name="Ward T.J."/>
            <person name="Yao J."/>
            <person name="Birren B.W."/>
            <person name="Kistler H.C."/>
        </authorList>
    </citation>
    <scope>NUCLEOTIDE SEQUENCE [LARGE SCALE GENOMIC DNA]</scope>
    <source>
        <strain>ATCC MYA-4620 / CBS 123657 / FGSC 9075 / NRRL 31084 / PH-1</strain>
    </source>
</reference>
<reference key="2">
    <citation type="journal article" date="2010" name="Nature">
        <title>Comparative genomics reveals mobile pathogenicity chromosomes in Fusarium.</title>
        <authorList>
            <person name="Ma L.-J."/>
            <person name="van der Does H.C."/>
            <person name="Borkovich K.A."/>
            <person name="Coleman J.J."/>
            <person name="Daboussi M.-J."/>
            <person name="Di Pietro A."/>
            <person name="Dufresne M."/>
            <person name="Freitag M."/>
            <person name="Grabherr M."/>
            <person name="Henrissat B."/>
            <person name="Houterman P.M."/>
            <person name="Kang S."/>
            <person name="Shim W.-B."/>
            <person name="Woloshuk C."/>
            <person name="Xie X."/>
            <person name="Xu J.-R."/>
            <person name="Antoniw J."/>
            <person name="Baker S.E."/>
            <person name="Bluhm B.H."/>
            <person name="Breakspear A."/>
            <person name="Brown D.W."/>
            <person name="Butchko R.A.E."/>
            <person name="Chapman S."/>
            <person name="Coulson R."/>
            <person name="Coutinho P.M."/>
            <person name="Danchin E.G.J."/>
            <person name="Diener A."/>
            <person name="Gale L.R."/>
            <person name="Gardiner D.M."/>
            <person name="Goff S."/>
            <person name="Hammond-Kosack K.E."/>
            <person name="Hilburn K."/>
            <person name="Hua-Van A."/>
            <person name="Jonkers W."/>
            <person name="Kazan K."/>
            <person name="Kodira C.D."/>
            <person name="Koehrsen M."/>
            <person name="Kumar L."/>
            <person name="Lee Y.-H."/>
            <person name="Li L."/>
            <person name="Manners J.M."/>
            <person name="Miranda-Saavedra D."/>
            <person name="Mukherjee M."/>
            <person name="Park G."/>
            <person name="Park J."/>
            <person name="Park S.-Y."/>
            <person name="Proctor R.H."/>
            <person name="Regev A."/>
            <person name="Ruiz-Roldan M.C."/>
            <person name="Sain D."/>
            <person name="Sakthikumar S."/>
            <person name="Sykes S."/>
            <person name="Schwartz D.C."/>
            <person name="Turgeon B.G."/>
            <person name="Wapinski I."/>
            <person name="Yoder O."/>
            <person name="Young S."/>
            <person name="Zeng Q."/>
            <person name="Zhou S."/>
            <person name="Galagan J."/>
            <person name="Cuomo C.A."/>
            <person name="Kistler H.C."/>
            <person name="Rep M."/>
        </authorList>
    </citation>
    <scope>GENOME REANNOTATION</scope>
    <source>
        <strain>ATCC MYA-4620 / CBS 123657 / FGSC 9075 / NRRL 31084 / PH-1</strain>
    </source>
</reference>
<reference key="3">
    <citation type="journal article" date="2015" name="BMC Genomics">
        <title>The completed genome sequence of the pathogenic ascomycete fungus Fusarium graminearum.</title>
        <authorList>
            <person name="King R."/>
            <person name="Urban M."/>
            <person name="Hammond-Kosack M.C.U."/>
            <person name="Hassani-Pak K."/>
            <person name="Hammond-Kosack K.E."/>
        </authorList>
    </citation>
    <scope>NUCLEOTIDE SEQUENCE [LARGE SCALE GENOMIC DNA]</scope>
    <source>
        <strain>ATCC MYA-4620 / CBS 123657 / FGSC 9075 / NRRL 31084 / PH-1</strain>
    </source>
</reference>
<reference key="4">
    <citation type="journal article" date="2005" name="Fungal Genet. Biol.">
        <title>Identification of a gene cluster responsible for the biosynthesis of aurofusarin in the Fusarium graminearum species complex.</title>
        <authorList>
            <person name="Malz S."/>
            <person name="Grell M.N."/>
            <person name="Thrane C."/>
            <person name="Maier F.J."/>
            <person name="Rosager P."/>
            <person name="Felk A."/>
            <person name="Albertsen K.S."/>
            <person name="Salomon S."/>
            <person name="Bohn L."/>
            <person name="Schaefer W."/>
            <person name="Giese H."/>
        </authorList>
    </citation>
    <scope>FUNCTION</scope>
</reference>
<reference key="5">
    <citation type="journal article" date="2006" name="Mol. Microbiol.">
        <title>The biosynthetic pathway for aurofusarin in Fusarium graminearum reveals a close link between the naphthoquinones and naphthopyrones.</title>
        <authorList>
            <person name="Frandsen R.J."/>
            <person name="Nielsen N.J."/>
            <person name="Maolanon N."/>
            <person name="Soerensen J.C."/>
            <person name="Olsson S."/>
            <person name="Nielsen J."/>
            <person name="Giese H."/>
        </authorList>
    </citation>
    <scope>FUNCTION</scope>
</reference>
<reference key="6">
    <citation type="journal article" date="2006" name="Appl. Environ. Microbiol.">
        <title>GIP2, a putative transcription factor that regulates the aurofusarin biosynthetic gene cluster in Gibberella zeae.</title>
        <authorList>
            <person name="Kim J.E."/>
            <person name="Jin J."/>
            <person name="Kim H."/>
            <person name="Kim J.C."/>
            <person name="Yun S.H."/>
            <person name="Lee Y.W."/>
        </authorList>
    </citation>
    <scope>FUNCTION</scope>
    <scope>INDUCTION</scope>
</reference>
<accession>I1RF57</accession>
<proteinExistence type="evidence at transcript level"/>
<sequence length="670" mass="75049">MTEAKLTRGHSCVPCQHRKIRCNGQTPCAYCIRTGKECVRMRVSPSHSRNARLNHRRLTAAQTGSPSGDGQVIVSGDQRRYVEDNKLWKSLGDEMQGKDVSPDPERPPLRTRTDTPSTEVNLIFSHQRPTSISVKYPSAVHSFQLWQVFISNVHPLTKILHGPTVQKDILETFSEPTSTPGPTEALIFAIYLVAVVSLTDAECRSRFGEPRKDLLARYCNATEVALSKADFLRSTDLRVLQAFTLHLLSLRHICDHDILWLLTGLATRMGQRMGLHRESSLKDLPPFEAELRRRVWWQIVILDGRASQLTGASMNPNMQLYGDTQQPINLSDADLVPSASTIPQPSPITTDMLFCKVRIEIGVWMIEQKCLLGSESESSTTGKAKFFKAIDELERHIEEKYLANMDKELPLNLLTAYLARSAVCQLRLSVYHPIHRPERASDLSAEQIDMLLENSLEVIRYDILSHSTPALQCYLWHIANFFPFETFVLLISTLSGRPAGQVVDTAWEVIDQVYEHHPSFVSDTSDPLYWALGNITLKAWDQRVTSARTRGITVPRELPCIANLVHARATMARASSQQPSTTDVSGPATPQSLLLAQEAPVDYLGGLGTTNELASQTDLGMATGEELLGMMKGVDVDWDFWQQLLDGNGHDARARDDQETFYFSSFINKA</sequence>
<name>AURR2_GIBZE</name>
<feature type="chain" id="PRO_0000441085" description="Aurofusarin cluster transcription factor aurR2">
    <location>
        <begin position="1"/>
        <end position="670"/>
    </location>
</feature>
<feature type="DNA-binding region" description="Zn(2)-C6 fungal-type" evidence="1">
    <location>
        <begin position="12"/>
        <end position="38"/>
    </location>
</feature>
<feature type="region of interest" description="Disordered" evidence="2">
    <location>
        <begin position="57"/>
        <end position="76"/>
    </location>
</feature>
<feature type="region of interest" description="Disordered" evidence="2">
    <location>
        <begin position="92"/>
        <end position="115"/>
    </location>
</feature>
<feature type="compositionally biased region" description="Basic and acidic residues" evidence="2">
    <location>
        <begin position="92"/>
        <end position="113"/>
    </location>
</feature>
<dbReference type="EMBL" id="HG970332">
    <property type="protein sequence ID" value="CEF74600.1"/>
    <property type="molecule type" value="Genomic_DNA"/>
</dbReference>
<dbReference type="RefSeq" id="XP_011318232.1">
    <property type="nucleotide sequence ID" value="XM_011319930.1"/>
</dbReference>
<dbReference type="SMR" id="I1RF57"/>
<dbReference type="STRING" id="229533.I1RF57"/>
<dbReference type="KEGG" id="fgr:FGSG_02323"/>
<dbReference type="VEuPathDB" id="FungiDB:FGRAMPH1_01G05591"/>
<dbReference type="eggNOG" id="ENOG502QYWX">
    <property type="taxonomic scope" value="Eukaryota"/>
</dbReference>
<dbReference type="HOGENOM" id="CLU_004083_5_3_1"/>
<dbReference type="InParanoid" id="I1RF57"/>
<dbReference type="OrthoDB" id="84128at110618"/>
<dbReference type="PHI-base" id="PHI:1972"/>
<dbReference type="Proteomes" id="UP000070720">
    <property type="component" value="Chromosome 1"/>
</dbReference>
<dbReference type="GO" id="GO:0005634">
    <property type="term" value="C:nucleus"/>
    <property type="evidence" value="ECO:0007669"/>
    <property type="project" value="UniProtKB-SubCell"/>
</dbReference>
<dbReference type="GO" id="GO:0003677">
    <property type="term" value="F:DNA binding"/>
    <property type="evidence" value="ECO:0007669"/>
    <property type="project" value="UniProtKB-KW"/>
</dbReference>
<dbReference type="GO" id="GO:0000981">
    <property type="term" value="F:DNA-binding transcription factor activity, RNA polymerase II-specific"/>
    <property type="evidence" value="ECO:0007669"/>
    <property type="project" value="InterPro"/>
</dbReference>
<dbReference type="GO" id="GO:0008270">
    <property type="term" value="F:zinc ion binding"/>
    <property type="evidence" value="ECO:0007669"/>
    <property type="project" value="InterPro"/>
</dbReference>
<dbReference type="GO" id="GO:0006351">
    <property type="term" value="P:DNA-templated transcription"/>
    <property type="evidence" value="ECO:0007669"/>
    <property type="project" value="InterPro"/>
</dbReference>
<dbReference type="CDD" id="cd12148">
    <property type="entry name" value="fungal_TF_MHR"/>
    <property type="match status" value="1"/>
</dbReference>
<dbReference type="CDD" id="cd00067">
    <property type="entry name" value="GAL4"/>
    <property type="match status" value="1"/>
</dbReference>
<dbReference type="Gene3D" id="4.10.240.10">
    <property type="entry name" value="Zn(2)-C6 fungal-type DNA-binding domain"/>
    <property type="match status" value="1"/>
</dbReference>
<dbReference type="InterPro" id="IPR050613">
    <property type="entry name" value="Sec_Metabolite_Reg"/>
</dbReference>
<dbReference type="InterPro" id="IPR007219">
    <property type="entry name" value="Transcription_factor_dom_fun"/>
</dbReference>
<dbReference type="InterPro" id="IPR036864">
    <property type="entry name" value="Zn2-C6_fun-type_DNA-bd_sf"/>
</dbReference>
<dbReference type="InterPro" id="IPR001138">
    <property type="entry name" value="Zn2Cys6_DnaBD"/>
</dbReference>
<dbReference type="PANTHER" id="PTHR31001">
    <property type="entry name" value="UNCHARACTERIZED TRANSCRIPTIONAL REGULATORY PROTEIN"/>
    <property type="match status" value="1"/>
</dbReference>
<dbReference type="PANTHER" id="PTHR31001:SF85">
    <property type="entry name" value="ZN(II)2CYS6 TRANSCRIPTION FACTOR (EUROFUNG)"/>
    <property type="match status" value="1"/>
</dbReference>
<dbReference type="Pfam" id="PF04082">
    <property type="entry name" value="Fungal_trans"/>
    <property type="match status" value="1"/>
</dbReference>
<dbReference type="Pfam" id="PF00172">
    <property type="entry name" value="Zn_clus"/>
    <property type="match status" value="1"/>
</dbReference>
<dbReference type="SMART" id="SM00906">
    <property type="entry name" value="Fungal_trans"/>
    <property type="match status" value="1"/>
</dbReference>
<dbReference type="SMART" id="SM00066">
    <property type="entry name" value="GAL4"/>
    <property type="match status" value="1"/>
</dbReference>
<dbReference type="SUPFAM" id="SSF57701">
    <property type="entry name" value="Zn2/Cys6 DNA-binding domain"/>
    <property type="match status" value="1"/>
</dbReference>
<dbReference type="PROSITE" id="PS50048">
    <property type="entry name" value="ZN2_CY6_FUNGAL_2"/>
    <property type="match status" value="1"/>
</dbReference>
<protein>
    <recommendedName>
        <fullName evidence="7">Aurofusarin cluster transcription factor aurR2</fullName>
    </recommendedName>
    <alternativeName>
        <fullName evidence="7">Aurofusarin biosynthesis cluster protein R2</fullName>
    </alternativeName>
    <alternativeName>
        <fullName evidence="6">Gibberella pigment protein 5</fullName>
    </alternativeName>
</protein>
<organism>
    <name type="scientific">Gibberella zeae (strain ATCC MYA-4620 / CBS 123657 / FGSC 9075 / NRRL 31084 / PH-1)</name>
    <name type="common">Wheat head blight fungus</name>
    <name type="synonym">Fusarium graminearum</name>
    <dbReference type="NCBI Taxonomy" id="229533"/>
    <lineage>
        <taxon>Eukaryota</taxon>
        <taxon>Fungi</taxon>
        <taxon>Dikarya</taxon>
        <taxon>Ascomycota</taxon>
        <taxon>Pezizomycotina</taxon>
        <taxon>Sordariomycetes</taxon>
        <taxon>Hypocreomycetidae</taxon>
        <taxon>Hypocreales</taxon>
        <taxon>Nectriaceae</taxon>
        <taxon>Fusarium</taxon>
    </lineage>
</organism>
<comment type="function">
    <text evidence="3 4 5">Transcription factor that may participate in the regulation of the expression of the gene cluster that mediates the biosynthesis of aurofusarin, a red mycelium pigment which is acting as a mycotoxin (PubMed:15809006, PubMed:16461721, PubMed:16879655).</text>
</comment>
<comment type="subcellular location">
    <subcellularLocation>
        <location evidence="1">Nucleus</location>
    </subcellularLocation>
</comment>
<comment type="induction">
    <text evidence="4">Expression is regulated by the aurofusarin biosynthesis cluster-specific transcription facto aurR1/GIP2 (PubMed:16461721).</text>
</comment>